<organismHost>
    <name type="scientific">Cercopithecidae</name>
    <name type="common">Old World monkeys</name>
    <dbReference type="NCBI Taxonomy" id="9527"/>
</organismHost>
<feature type="chain" id="PRO_0000085309" description="Pol polyprotein">
    <location>
        <begin position="1" status="less than"/>
        <end position="100" status="greater than"/>
    </location>
</feature>
<feature type="domain" description="RNase H type-1" evidence="1">
    <location>
        <begin position="58"/>
        <end position="100" status="greater than"/>
    </location>
</feature>
<feature type="non-terminal residue">
    <location>
        <position position="1"/>
    </location>
</feature>
<feature type="non-terminal residue">
    <location>
        <position position="100"/>
    </location>
</feature>
<accession>P12501</accession>
<dbReference type="EMBL" id="M21311">
    <property type="protein sequence ID" value="AAA47583.1"/>
    <property type="molecule type" value="Genomic_RNA"/>
</dbReference>
<dbReference type="SMR" id="P12501"/>
<dbReference type="MEROPS" id="A02.003"/>
<dbReference type="GO" id="GO:0004190">
    <property type="term" value="F:aspartic-type endopeptidase activity"/>
    <property type="evidence" value="ECO:0007669"/>
    <property type="project" value="UniProtKB-KW"/>
</dbReference>
<dbReference type="GO" id="GO:0003676">
    <property type="term" value="F:nucleic acid binding"/>
    <property type="evidence" value="ECO:0007669"/>
    <property type="project" value="InterPro"/>
</dbReference>
<dbReference type="GO" id="GO:0003964">
    <property type="term" value="F:RNA-directed DNA polymerase activity"/>
    <property type="evidence" value="ECO:0007669"/>
    <property type="project" value="UniProtKB-KW"/>
</dbReference>
<dbReference type="GO" id="GO:0004523">
    <property type="term" value="F:RNA-DNA hybrid ribonuclease activity"/>
    <property type="evidence" value="ECO:0007669"/>
    <property type="project" value="InterPro"/>
</dbReference>
<dbReference type="GO" id="GO:0015074">
    <property type="term" value="P:DNA integration"/>
    <property type="evidence" value="ECO:0007669"/>
    <property type="project" value="UniProtKB-KW"/>
</dbReference>
<dbReference type="GO" id="GO:0006310">
    <property type="term" value="P:DNA recombination"/>
    <property type="evidence" value="ECO:0007669"/>
    <property type="project" value="UniProtKB-KW"/>
</dbReference>
<dbReference type="GO" id="GO:0006508">
    <property type="term" value="P:proteolysis"/>
    <property type="evidence" value="ECO:0007669"/>
    <property type="project" value="UniProtKB-KW"/>
</dbReference>
<dbReference type="GO" id="GO:0039657">
    <property type="term" value="P:symbiont-mediated suppression of host gene expression"/>
    <property type="evidence" value="ECO:0007669"/>
    <property type="project" value="UniProtKB-KW"/>
</dbReference>
<dbReference type="Gene3D" id="3.30.70.270">
    <property type="match status" value="1"/>
</dbReference>
<dbReference type="Gene3D" id="3.30.420.10">
    <property type="entry name" value="Ribonuclease H-like superfamily/Ribonuclease H"/>
    <property type="match status" value="1"/>
</dbReference>
<dbReference type="InterPro" id="IPR043128">
    <property type="entry name" value="Rev_trsase/Diguanyl_cyclase"/>
</dbReference>
<dbReference type="InterPro" id="IPR012337">
    <property type="entry name" value="RNaseH-like_sf"/>
</dbReference>
<dbReference type="InterPro" id="IPR002156">
    <property type="entry name" value="RNaseH_domain"/>
</dbReference>
<dbReference type="InterPro" id="IPR036397">
    <property type="entry name" value="RNaseH_sf"/>
</dbReference>
<dbReference type="InterPro" id="IPR010659">
    <property type="entry name" value="RVT_connect"/>
</dbReference>
<dbReference type="Pfam" id="PF00075">
    <property type="entry name" value="RNase_H"/>
    <property type="match status" value="1"/>
</dbReference>
<dbReference type="Pfam" id="PF06815">
    <property type="entry name" value="RVT_connect"/>
    <property type="match status" value="1"/>
</dbReference>
<dbReference type="SUPFAM" id="SSF53098">
    <property type="entry name" value="Ribonuclease H-like"/>
    <property type="match status" value="1"/>
</dbReference>
<dbReference type="PROSITE" id="PS50879">
    <property type="entry name" value="RNASE_H_1"/>
    <property type="match status" value="1"/>
</dbReference>
<protein>
    <recommendedName>
        <fullName>Pol polyprotein</fullName>
    </recommendedName>
</protein>
<sequence length="100" mass="12024">KEALVIWGELPTLELPVEREVWEQWWADYWQVSWIPEWDFVSTPPWLKLWYTLTKEPLAKEDVYYVDGACNRNSREGKAGYITQYGKQRVEKLENTTNQQ</sequence>
<proteinExistence type="inferred from homology"/>
<organism>
    <name type="scientific">Simian immunodeficiency virus agm.vervet (isolate AGM385)</name>
    <name type="common">SIV-agm.ver</name>
    <name type="synonym">Simian immunodeficiency virus African green monkey vervet</name>
    <dbReference type="NCBI Taxonomy" id="11729"/>
    <lineage>
        <taxon>Viruses</taxon>
        <taxon>Riboviria</taxon>
        <taxon>Pararnavirae</taxon>
        <taxon>Artverviricota</taxon>
        <taxon>Revtraviricetes</taxon>
        <taxon>Ortervirales</taxon>
        <taxon>Retroviridae</taxon>
        <taxon>Orthoretrovirinae</taxon>
        <taxon>Lentivirus</taxon>
        <taxon>Simian immunodeficiency virus</taxon>
    </lineage>
</organism>
<reference key="1">
    <citation type="journal article" date="1988" name="J. Virol.">
        <title>Simian immunodeficiency virus from African green monkeys.</title>
        <authorList>
            <person name="Daniel M.D."/>
            <person name="Li Y."/>
            <person name="Naidu Y.M."/>
            <person name="Durda P.J."/>
            <person name="Schmidt D.K."/>
            <person name="Troup C.D."/>
            <person name="Silva D.P."/>
            <person name="Mackey J.J."/>
            <person name="Kestler H.W."/>
            <person name="Sehgal P.K."/>
            <person name="King N.W."/>
            <person name="Ohta Y."/>
            <person name="Hayami M."/>
            <person name="Desrosiers R.C."/>
        </authorList>
    </citation>
    <scope>NUCLEOTIDE SEQUENCE [GENOMIC RNA]</scope>
</reference>
<comment type="function">
    <text>During replicative cycle of retroviruses, the reverse-transcribed viral DNA is integrated into the host chromosome by the viral integrase enzyme. RNase H activity is associated with the reverse transcriptase.</text>
</comment>
<comment type="miscellaneous">
    <text>This is an African green monkey isolate.</text>
</comment>
<comment type="similarity">
    <text evidence="2">Belongs to the retroviral Pol polyprotein family.</text>
</comment>
<gene>
    <name type="primary">pol</name>
</gene>
<keyword id="KW-0064">Aspartyl protease</keyword>
<keyword id="KW-0229">DNA integration</keyword>
<keyword id="KW-0233">DNA recombination</keyword>
<keyword id="KW-0255">Endonuclease</keyword>
<keyword id="KW-1262">Eukaryotic host gene expression shutoff by virus</keyword>
<keyword id="KW-1193">Eukaryotic host translation shutoff by virus</keyword>
<keyword id="KW-1190">Host gene expression shutoff by virus</keyword>
<keyword id="KW-0945">Host-virus interaction</keyword>
<keyword id="KW-0378">Hydrolase</keyword>
<keyword id="KW-0511">Multifunctional enzyme</keyword>
<keyword id="KW-0540">Nuclease</keyword>
<keyword id="KW-0548">Nucleotidyltransferase</keyword>
<keyword id="KW-0645">Protease</keyword>
<keyword id="KW-0695">RNA-directed DNA polymerase</keyword>
<keyword id="KW-0808">Transferase</keyword>
<evidence type="ECO:0000255" key="1">
    <source>
        <dbReference type="PROSITE-ProRule" id="PRU00408"/>
    </source>
</evidence>
<evidence type="ECO:0000305" key="2"/>
<name>POL_SIVV3</name>